<organism>
    <name type="scientific">Mus musculus</name>
    <name type="common">Mouse</name>
    <dbReference type="NCBI Taxonomy" id="10090"/>
    <lineage>
        <taxon>Eukaryota</taxon>
        <taxon>Metazoa</taxon>
        <taxon>Chordata</taxon>
        <taxon>Craniata</taxon>
        <taxon>Vertebrata</taxon>
        <taxon>Euteleostomi</taxon>
        <taxon>Mammalia</taxon>
        <taxon>Eutheria</taxon>
        <taxon>Euarchontoglires</taxon>
        <taxon>Glires</taxon>
        <taxon>Rodentia</taxon>
        <taxon>Myomorpha</taxon>
        <taxon>Muroidea</taxon>
        <taxon>Muridae</taxon>
        <taxon>Murinae</taxon>
        <taxon>Mus</taxon>
        <taxon>Mus</taxon>
    </lineage>
</organism>
<keyword id="KW-1003">Cell membrane</keyword>
<keyword id="KW-0217">Developmental protein</keyword>
<keyword id="KW-0221">Differentiation</keyword>
<keyword id="KW-1015">Disulfide bond</keyword>
<keyword id="KW-0325">Glycoprotein</keyword>
<keyword id="KW-0336">GPI-anchor</keyword>
<keyword id="KW-0393">Immunoglobulin domain</keyword>
<keyword id="KW-0395">Inflammatory response</keyword>
<keyword id="KW-0449">Lipoprotein</keyword>
<keyword id="KW-0472">Membrane</keyword>
<keyword id="KW-0488">Methylation</keyword>
<keyword id="KW-0524">Neurogenesis</keyword>
<keyword id="KW-1185">Reference proteome</keyword>
<keyword id="KW-0732">Signal</keyword>
<accession>Q9QUR8</accession>
<accession>O88371</accession>
<comment type="function">
    <text evidence="4 5 6">Plays an important role in integrin-mediated signaling and functions both in regulating cell migration and immune responses. Promotes formation of focal adhesion complexes, activation of the protein kinase PTK2/FAK1 and subsequent phosphorylation of MAPK1 and MAPK3. Promotes production of pro-inflammatory cytokines by monocytes and macrophages. Plays an important role in modulating inflammation and T-cell-mediated immune responses. Promotes axon growth in the embryonic olfactory bulb. Promotes attachment, spreading and dendrite outgrowth in melanocytes.</text>
</comment>
<comment type="subunit">
    <text evidence="1 6">Interacts with PLXNC1 (By similarity). Interacts with ITGA1 and ITGB1.</text>
</comment>
<comment type="subcellular location">
    <subcellularLocation>
        <location evidence="6">Cell membrane</location>
        <topology evidence="6">Lipid-anchor</topology>
        <topology evidence="6">GPI-anchor</topology>
        <orientation evidence="6">Extracellular side</orientation>
    </subcellularLocation>
</comment>
<comment type="tissue specificity">
    <text evidence="5 6">Highly expressed in activated T-cells (at protein level). Highest expression in brain. Lower in heart, thymus, spleen, testis and ovary. The expression increases in late embryonic and postnatal stages. Detected in T-cells.</text>
</comment>
<comment type="disruption phenotype">
    <text evidence="4 5 6">No visible phenotype. Mice display normal levels of lymphocytes in spleen, and normal activation of T-cells by antigenic stimuli. In contrast, production of pro-inflammatory cytokines by macrophages is much reduced. The effect on contact hypersensitivity and experimental autoimmune encephalomyelitis is controversial. Reduced size of the lateral olfactory tract.</text>
</comment>
<comment type="similarity">
    <text evidence="8">Belongs to the semaphorin family.</text>
</comment>
<comment type="caution">
    <text evidence="9 10">The exact role in regulating T-cell function is under debate. According to (PubMed:16713976), SEMA7A-deficient mice are highly susceptible to contact hypersensitivity and experimental autoimmune encephalomyelitis. According to (PubMed:17377534) mice do not develop contact hypersensitivity, and are highly resistant to experimental autoimmune encephalomyelitis.</text>
</comment>
<sequence length="664" mass="74994">MTPPPPGRAAPSAPRARVLSLPARFGLPLRLRLLLVFWVAAASAQGHSRSGPRISAVWKGQDHVDFSQPEPHTVLFHEPGSFSVWVGGRGKVYHFNFPEGKNASVRTVNIGSTKGSCQDKQDCGNYITLLERRGNGLLVCGTNARKPSCWNLVNDSVVMSLGEMKGYAPFSPDENSLVLFEGDEVYSTIRKQEYNGKIPRFRRIRGESELYTSDTVMQNPQFIKATIVHQDQAYDDKIYYFFREDNPDKNPEAPLNVSRVAQLCRGDQGGESSLSVSKWNTFLKAMLVCSDAATNRNFNRLQDVFLLPDPSGQWRDTRVYGVFSNPWNYSAVCVYSLGDIDRVFRTSSLKGYHMGLPNPRPGMCLPKKQPIPTETFQVADSHPEVAQRVEPMGPLKTPLFHSKYHYQKVVVHRMQASNGETFHVLYLTTDRGTIHKVVESGDQDHSFVFNIMEIQPFHRAAAIQAISLDADRRKLYVTSQWEVSQVPLDMCEVYSGGCHGCLMSRDPYCGWDQDRCVSIYSSQRSVLQSINPAEPHRECPNPKPDEAPLQKVSLARNSRYYLTCPMESRHATYLWRHEENVEQSCEPGHQSPSCILFIENLTARQYGHYRCEAQEGSYLREAQHWELLPEDRALAEQLMGHARALAASFWLGVLPTLILGLLVH</sequence>
<name>SEM7A_MOUSE</name>
<gene>
    <name type="primary">Sema7a</name>
    <name type="synonym">Cd108</name>
    <name type="synonym">Semal</name>
    <name type="synonym">Semk1</name>
</gene>
<feature type="signal peptide" evidence="2">
    <location>
        <begin position="1"/>
        <end position="44"/>
    </location>
</feature>
<feature type="chain" id="PRO_0000032349" description="Semaphorin-7A">
    <location>
        <begin position="45"/>
        <end position="646"/>
    </location>
</feature>
<feature type="propeptide" id="PRO_0000032350" description="Removed in mature form" evidence="2">
    <location>
        <begin position="647"/>
        <end position="664"/>
    </location>
</feature>
<feature type="domain" description="Sema" evidence="3">
    <location>
        <begin position="53"/>
        <end position="488"/>
    </location>
</feature>
<feature type="domain" description="Ig-like C2-type">
    <location>
        <begin position="542"/>
        <end position="627"/>
    </location>
</feature>
<feature type="region of interest" description="Interaction with integrins" evidence="1">
    <location>
        <begin position="265"/>
        <end position="267"/>
    </location>
</feature>
<feature type="short sequence motif" description="Cell attachment site" evidence="2">
    <location>
        <begin position="265"/>
        <end position="267"/>
    </location>
</feature>
<feature type="modified residue" description="Asymmetric dimethylarginine" evidence="11">
    <location>
        <position position="132"/>
    </location>
</feature>
<feature type="lipid moiety-binding region" description="GPI-anchor amidated alanine" evidence="2">
    <location>
        <position position="646"/>
    </location>
</feature>
<feature type="glycosylation site" description="N-linked (GlcNAc...) asparagine" evidence="2">
    <location>
        <position position="102"/>
    </location>
</feature>
<feature type="glycosylation site" description="N-linked (GlcNAc...) asparagine" evidence="2">
    <location>
        <position position="154"/>
    </location>
</feature>
<feature type="glycosylation site" description="N-linked (GlcNAc...) asparagine" evidence="2">
    <location>
        <position position="256"/>
    </location>
</feature>
<feature type="glycosylation site" description="N-linked (GlcNAc...) asparagine" evidence="2">
    <location>
        <position position="328"/>
    </location>
</feature>
<feature type="glycosylation site" description="N-linked (GlcNAc...) asparagine" evidence="2">
    <location>
        <position position="600"/>
    </location>
</feature>
<feature type="disulfide bond" evidence="1">
    <location>
        <begin position="117"/>
        <end position="123"/>
    </location>
</feature>
<feature type="disulfide bond" evidence="1">
    <location>
        <begin position="140"/>
        <end position="149"/>
    </location>
</feature>
<feature type="disulfide bond" evidence="1">
    <location>
        <begin position="264"/>
        <end position="364"/>
    </location>
</feature>
<feature type="disulfide bond" evidence="1">
    <location>
        <begin position="289"/>
        <end position="333"/>
    </location>
</feature>
<feature type="disulfide bond" evidence="1">
    <location>
        <begin position="491"/>
        <end position="509"/>
    </location>
</feature>
<feature type="disulfide bond" evidence="1">
    <location>
        <begin position="498"/>
        <end position="539"/>
    </location>
</feature>
<feature type="disulfide bond" evidence="1">
    <location>
        <begin position="501"/>
        <end position="516"/>
    </location>
</feature>
<feature type="disulfide bond" evidence="1">
    <location>
        <begin position="564"/>
        <end position="611"/>
    </location>
</feature>
<feature type="disulfide bond" evidence="1">
    <location>
        <begin position="585"/>
        <end position="594"/>
    </location>
</feature>
<feature type="mutagenesis site" description="Homozygous mutant mice show signs of hepatocytes degeneration associated with elevated serum levels of total bile acid, alanine transaminase and aspartate transaminase. Levels of the canalicular bile acid transporters ABCB11 and ABCC2 are reduced." evidence="7">
    <original>R</original>
    <variation>W</variation>
    <location>
        <position position="145"/>
    </location>
</feature>
<feature type="sequence conflict" description="In Ref. 2; AAC34262." evidence="8" ref="2">
    <original>P</original>
    <variation>S</variation>
    <location>
        <position position="357"/>
    </location>
</feature>
<proteinExistence type="evidence at protein level"/>
<reference key="1">
    <citation type="journal article" date="1998" name="Biochim. Biophys. Acta">
        <title>Molecular cloning and expression of murine homologue of semaphorin K1 gene.</title>
        <authorList>
            <person name="Sato Y."/>
            <person name="Takahashi H."/>
        </authorList>
    </citation>
    <scope>NUCLEOTIDE SEQUENCE [MRNA]</scope>
    <source>
        <tissue>Brain</tissue>
    </source>
</reference>
<reference key="2">
    <citation type="journal article" date="1998" name="Genomics">
        <title>New eukaryotic semaphorins with close homology to semaphorins of DNA viruses.</title>
        <authorList>
            <person name="Lange C."/>
            <person name="Liehr T."/>
            <person name="Goen M."/>
            <person name="Gebhart E."/>
            <person name="Fleckenstein B."/>
            <person name="Ensser A."/>
        </authorList>
    </citation>
    <scope>NUCLEOTIDE SEQUENCE [MRNA]</scope>
    <source>
        <tissue>Testis</tissue>
    </source>
</reference>
<reference key="3">
    <citation type="journal article" date="2000" name="Tissue Antigens">
        <title>CDw108 expression during T-cell development.</title>
        <authorList>
            <person name="Mine T."/>
            <person name="Harada K."/>
            <person name="Matsumoto T."/>
            <person name="Yamana H."/>
            <person name="Shirouzu K."/>
            <person name="Itoh K."/>
            <person name="Yamada A."/>
        </authorList>
    </citation>
    <scope>NUCLEOTIDE SEQUENCE [MRNA]</scope>
    <source>
        <strain>C57BL/6J</strain>
        <tissue>Embryo</tissue>
    </source>
</reference>
<reference key="4">
    <citation type="journal article" date="2004" name="Genome Res.">
        <title>The status, quality, and expansion of the NIH full-length cDNA project: the Mammalian Gene Collection (MGC).</title>
        <authorList>
            <consortium name="The MGC Project Team"/>
        </authorList>
    </citation>
    <scope>NUCLEOTIDE SEQUENCE [LARGE SCALE MRNA]</scope>
    <source>
        <strain>129</strain>
        <tissue>Mammary gland</tissue>
    </source>
</reference>
<reference key="5">
    <citation type="journal article" date="2003" name="Nature">
        <title>Semaphorin 7A promotes axon outgrowth through integrins and MAPKs.</title>
        <authorList>
            <person name="Pasterkamp R.J."/>
            <person name="Peschon J.J."/>
            <person name="Spriggs M.K."/>
            <person name="Kolodkin A.L."/>
        </authorList>
    </citation>
    <scope>DISRUPTION PHENOTYPE</scope>
    <scope>FUNCTION</scope>
</reference>
<reference key="6">
    <citation type="journal article" date="2006" name="Immunity">
        <title>Semaphorin 7A is a negative regulator of T cell responses.</title>
        <authorList>
            <person name="Czopik A.K."/>
            <person name="Bynoe M.S."/>
            <person name="Palm N."/>
            <person name="Raine C.S."/>
            <person name="Medzhitov R."/>
        </authorList>
    </citation>
    <scope>DISRUPTION PHENOTYPE</scope>
    <scope>FUNCTION</scope>
    <scope>TISSUE SPECIFICITY</scope>
</reference>
<reference key="7">
    <citation type="journal article" date="2007" name="Nature">
        <title>Semaphorin 7A initiates T-cell-mediated inflammatory responses through alpha1beta1 integrin.</title>
        <authorList>
            <person name="Suzuki K."/>
            <person name="Okuno T."/>
            <person name="Yamamoto M."/>
            <person name="Pasterkamp R.J."/>
            <person name="Takegahara N."/>
            <person name="Takamatsu H."/>
            <person name="Kitao T."/>
            <person name="Takagi J."/>
            <person name="Rennert P.D."/>
            <person name="Kolodkin A.L."/>
            <person name="Kumanogoh A."/>
            <person name="Kikutani H."/>
        </authorList>
    </citation>
    <scope>FUNCTION</scope>
    <scope>DISRUPTION PHENOTYPE</scope>
    <scope>SUBCELLULAR LOCATION</scope>
    <scope>INTERACTION WITH ITGA1 AND ITGB1</scope>
    <scope>TISSUE SPECIFICITY</scope>
</reference>
<reference key="8">
    <citation type="journal article" date="2014" name="Mol. Cell. Proteomics">
        <title>Immunoaffinity enrichment and mass spectrometry analysis of protein methylation.</title>
        <authorList>
            <person name="Guo A."/>
            <person name="Gu H."/>
            <person name="Zhou J."/>
            <person name="Mulhern D."/>
            <person name="Wang Y."/>
            <person name="Lee K.A."/>
            <person name="Yang V."/>
            <person name="Aguiar M."/>
            <person name="Kornhauser J."/>
            <person name="Jia X."/>
            <person name="Ren J."/>
            <person name="Beausoleil S.A."/>
            <person name="Silva J.C."/>
            <person name="Vemulapalli V."/>
            <person name="Bedford M.T."/>
            <person name="Comb M.J."/>
        </authorList>
    </citation>
    <scope>METHYLATION [LARGE SCALE ANALYSIS] AT ARG-132</scope>
    <scope>IDENTIFICATION BY MASS SPECTROMETRY [LARGE SCALE ANALYSIS]</scope>
    <source>
        <tissue>Embryo</tissue>
    </source>
</reference>
<reference key="9">
    <citation type="journal article" date="2021" name="EMBO Mol. Med.">
        <title>A homozygous R148W mutation in Semaphorin 7A causes progressive familial intrahepatic cholestasis.</title>
        <authorList>
            <person name="Pan Q."/>
            <person name="Luo G."/>
            <person name="Qu J."/>
            <person name="Chen S."/>
            <person name="Zhang X."/>
            <person name="Zhao N."/>
            <person name="Ding J."/>
            <person name="Yang H."/>
            <person name="Li M."/>
            <person name="Li L."/>
            <person name="Cheng Y."/>
            <person name="Li X."/>
            <person name="Xie Q."/>
            <person name="Li Q."/>
            <person name="Zhou X."/>
            <person name="Zou H."/>
            <person name="Fan S."/>
            <person name="Zou L."/>
            <person name="Liu W."/>
            <person name="Deng G."/>
            <person name="Cai S.Y."/>
            <person name="Boyer J.L."/>
            <person name="Chai J."/>
        </authorList>
    </citation>
    <scope>MUTAGENESIS OF ARG-145</scope>
</reference>
<protein>
    <recommendedName>
        <fullName>Semaphorin-7A</fullName>
    </recommendedName>
    <alternativeName>
        <fullName>Semaphorin-K1</fullName>
        <shortName>Sema K1</shortName>
    </alternativeName>
    <alternativeName>
        <fullName>Semaphorin-L</fullName>
        <shortName>Sema L</shortName>
    </alternativeName>
    <cdAntigenName>CD108</cdAntigenName>
</protein>
<evidence type="ECO:0000250" key="1"/>
<evidence type="ECO:0000255" key="2"/>
<evidence type="ECO:0000255" key="3">
    <source>
        <dbReference type="PROSITE-ProRule" id="PRU00352"/>
    </source>
</evidence>
<evidence type="ECO:0000269" key="4">
    <source>
    </source>
</evidence>
<evidence type="ECO:0000269" key="5">
    <source>
    </source>
</evidence>
<evidence type="ECO:0000269" key="6">
    <source>
    </source>
</evidence>
<evidence type="ECO:0000269" key="7">
    <source>
    </source>
</evidence>
<evidence type="ECO:0000305" key="8"/>
<evidence type="ECO:0000305" key="9">
    <source>
    </source>
</evidence>
<evidence type="ECO:0000305" key="10">
    <source>
    </source>
</evidence>
<evidence type="ECO:0007744" key="11">
    <source>
    </source>
</evidence>
<dbReference type="EMBL" id="AB017532">
    <property type="protein sequence ID" value="BAA75665.1"/>
    <property type="molecule type" value="mRNA"/>
</dbReference>
<dbReference type="EMBL" id="AF030699">
    <property type="protein sequence ID" value="AAC34262.1"/>
    <property type="molecule type" value="mRNA"/>
</dbReference>
<dbReference type="EMBL" id="AF176670">
    <property type="protein sequence ID" value="AAD53118.1"/>
    <property type="molecule type" value="mRNA"/>
</dbReference>
<dbReference type="EMBL" id="BC057875">
    <property type="protein sequence ID" value="AAH57875.1"/>
    <property type="molecule type" value="mRNA"/>
</dbReference>
<dbReference type="CCDS" id="CCDS23235.1"/>
<dbReference type="RefSeq" id="NP_035482.1">
    <property type="nucleotide sequence ID" value="NM_011352.3"/>
</dbReference>
<dbReference type="SMR" id="Q9QUR8"/>
<dbReference type="BioGRID" id="203176">
    <property type="interactions" value="7"/>
</dbReference>
<dbReference type="FunCoup" id="Q9QUR8">
    <property type="interactions" value="521"/>
</dbReference>
<dbReference type="IntAct" id="Q9QUR8">
    <property type="interactions" value="2"/>
</dbReference>
<dbReference type="MINT" id="Q9QUR8"/>
<dbReference type="STRING" id="10090.ENSMUSP00000042211"/>
<dbReference type="GlyConnect" id="2702">
    <property type="glycosylation" value="7 N-Linked glycans (1 site)"/>
</dbReference>
<dbReference type="GlyCosmos" id="Q9QUR8">
    <property type="glycosylation" value="5 sites, 7 glycans"/>
</dbReference>
<dbReference type="GlyGen" id="Q9QUR8">
    <property type="glycosylation" value="5 sites, 10 N-linked glycans (3 sites)"/>
</dbReference>
<dbReference type="iPTMnet" id="Q9QUR8"/>
<dbReference type="PhosphoSitePlus" id="Q9QUR8"/>
<dbReference type="SwissPalm" id="Q9QUR8"/>
<dbReference type="jPOST" id="Q9QUR8"/>
<dbReference type="PaxDb" id="10090-ENSMUSP00000042211"/>
<dbReference type="PeptideAtlas" id="Q9QUR8"/>
<dbReference type="ProteomicsDB" id="256541"/>
<dbReference type="ABCD" id="Q9QUR8">
    <property type="antibodies" value="22 sequenced antibodies"/>
</dbReference>
<dbReference type="Antibodypedia" id="14570">
    <property type="antibodies" value="431 antibodies from 33 providers"/>
</dbReference>
<dbReference type="DNASU" id="20361"/>
<dbReference type="Ensembl" id="ENSMUST00000043059.9">
    <property type="protein sequence ID" value="ENSMUSP00000042211.8"/>
    <property type="gene ID" value="ENSMUSG00000038264.9"/>
</dbReference>
<dbReference type="GeneID" id="20361"/>
<dbReference type="KEGG" id="mmu:20361"/>
<dbReference type="UCSC" id="uc009pvy.1">
    <property type="organism name" value="mouse"/>
</dbReference>
<dbReference type="AGR" id="MGI:1306826"/>
<dbReference type="CTD" id="8482"/>
<dbReference type="MGI" id="MGI:1306826">
    <property type="gene designation" value="Sema7a"/>
</dbReference>
<dbReference type="VEuPathDB" id="HostDB:ENSMUSG00000038264"/>
<dbReference type="eggNOG" id="KOG3611">
    <property type="taxonomic scope" value="Eukaryota"/>
</dbReference>
<dbReference type="GeneTree" id="ENSGT00940000158358"/>
<dbReference type="HOGENOM" id="CLU_009051_11_1_1"/>
<dbReference type="InParanoid" id="Q9QUR8"/>
<dbReference type="OMA" id="GYHMGLP"/>
<dbReference type="OrthoDB" id="9945363at2759"/>
<dbReference type="PhylomeDB" id="Q9QUR8"/>
<dbReference type="TreeFam" id="TF333698"/>
<dbReference type="Reactome" id="R-MMU-416700">
    <property type="pathway name" value="Other semaphorin interactions"/>
</dbReference>
<dbReference type="BioGRID-ORCS" id="20361">
    <property type="hits" value="2 hits in 79 CRISPR screens"/>
</dbReference>
<dbReference type="CD-CODE" id="CE726F99">
    <property type="entry name" value="Postsynaptic density"/>
</dbReference>
<dbReference type="PRO" id="PR:Q9QUR8"/>
<dbReference type="Proteomes" id="UP000000589">
    <property type="component" value="Chromosome 9"/>
</dbReference>
<dbReference type="RNAct" id="Q9QUR8">
    <property type="molecule type" value="protein"/>
</dbReference>
<dbReference type="Bgee" id="ENSMUSG00000038264">
    <property type="expression patterns" value="Expressed in ectoplacental cone and 208 other cell types or tissues"/>
</dbReference>
<dbReference type="ExpressionAtlas" id="Q9QUR8">
    <property type="expression patterns" value="baseline and differential"/>
</dbReference>
<dbReference type="GO" id="GO:0009897">
    <property type="term" value="C:external side of plasma membrane"/>
    <property type="evidence" value="ECO:0000314"/>
    <property type="project" value="UniProtKB"/>
</dbReference>
<dbReference type="GO" id="GO:0098982">
    <property type="term" value="C:GABA-ergic synapse"/>
    <property type="evidence" value="ECO:0000314"/>
    <property type="project" value="SynGO"/>
</dbReference>
<dbReference type="GO" id="GO:0005886">
    <property type="term" value="C:plasma membrane"/>
    <property type="evidence" value="ECO:0000304"/>
    <property type="project" value="Reactome"/>
</dbReference>
<dbReference type="GO" id="GO:0098793">
    <property type="term" value="C:presynapse"/>
    <property type="evidence" value="ECO:0000314"/>
    <property type="project" value="SynGO"/>
</dbReference>
<dbReference type="GO" id="GO:0005178">
    <property type="term" value="F:integrin binding"/>
    <property type="evidence" value="ECO:0000353"/>
    <property type="project" value="UniProtKB"/>
</dbReference>
<dbReference type="GO" id="GO:0030215">
    <property type="term" value="F:semaphorin receptor binding"/>
    <property type="evidence" value="ECO:0007669"/>
    <property type="project" value="InterPro"/>
</dbReference>
<dbReference type="GO" id="GO:0048675">
    <property type="term" value="P:axon extension"/>
    <property type="evidence" value="ECO:0000314"/>
    <property type="project" value="MGI"/>
</dbReference>
<dbReference type="GO" id="GO:0006954">
    <property type="term" value="P:inflammatory response"/>
    <property type="evidence" value="ECO:0007669"/>
    <property type="project" value="UniProtKB-KW"/>
</dbReference>
<dbReference type="GO" id="GO:0007229">
    <property type="term" value="P:integrin-mediated signaling pathway"/>
    <property type="evidence" value="ECO:0000314"/>
    <property type="project" value="UniProtKB"/>
</dbReference>
<dbReference type="GO" id="GO:0031175">
    <property type="term" value="P:neuron projection development"/>
    <property type="evidence" value="ECO:0000315"/>
    <property type="project" value="MGI"/>
</dbReference>
<dbReference type="GO" id="GO:0021988">
    <property type="term" value="P:olfactory lobe development"/>
    <property type="evidence" value="ECO:0000314"/>
    <property type="project" value="MGI"/>
</dbReference>
<dbReference type="GO" id="GO:0045773">
    <property type="term" value="P:positive regulation of axon extension"/>
    <property type="evidence" value="ECO:0000314"/>
    <property type="project" value="MGI"/>
</dbReference>
<dbReference type="GO" id="GO:0070374">
    <property type="term" value="P:positive regulation of ERK1 and ERK2 cascade"/>
    <property type="evidence" value="ECO:0000314"/>
    <property type="project" value="UniProtKB"/>
</dbReference>
<dbReference type="GO" id="GO:0060907">
    <property type="term" value="P:positive regulation of macrophage cytokine production"/>
    <property type="evidence" value="ECO:0000314"/>
    <property type="project" value="UniProtKB"/>
</dbReference>
<dbReference type="GO" id="GO:0050727">
    <property type="term" value="P:regulation of inflammatory response"/>
    <property type="evidence" value="ECO:0000314"/>
    <property type="project" value="UniProtKB"/>
</dbReference>
<dbReference type="GO" id="GO:0090128">
    <property type="term" value="P:regulation of synapse maturation"/>
    <property type="evidence" value="ECO:0000314"/>
    <property type="project" value="SynGO"/>
</dbReference>
<dbReference type="CDD" id="cd11243">
    <property type="entry name" value="Sema_7A"/>
    <property type="match status" value="1"/>
</dbReference>
<dbReference type="FunFam" id="3.30.1680.10:FF:000017">
    <property type="entry name" value="Semaphorin 7A"/>
    <property type="match status" value="1"/>
</dbReference>
<dbReference type="FunFam" id="2.130.10.10:FF:000223">
    <property type="entry name" value="semaphorin-7A isoform X1"/>
    <property type="match status" value="1"/>
</dbReference>
<dbReference type="FunFam" id="2.60.40.10:FF:000640">
    <property type="entry name" value="semaphorin-7A isoform X2"/>
    <property type="match status" value="1"/>
</dbReference>
<dbReference type="Gene3D" id="2.60.40.10">
    <property type="entry name" value="Immunoglobulins"/>
    <property type="match status" value="1"/>
</dbReference>
<dbReference type="Gene3D" id="3.30.1680.10">
    <property type="entry name" value="ligand-binding face of the semaphorins, domain 2"/>
    <property type="match status" value="1"/>
</dbReference>
<dbReference type="Gene3D" id="2.130.10.10">
    <property type="entry name" value="YVTN repeat-like/Quinoprotein amine dehydrogenase"/>
    <property type="match status" value="1"/>
</dbReference>
<dbReference type="InterPro" id="IPR007110">
    <property type="entry name" value="Ig-like_dom"/>
</dbReference>
<dbReference type="InterPro" id="IPR036179">
    <property type="entry name" value="Ig-like_dom_sf"/>
</dbReference>
<dbReference type="InterPro" id="IPR013783">
    <property type="entry name" value="Ig-like_fold"/>
</dbReference>
<dbReference type="InterPro" id="IPR002165">
    <property type="entry name" value="Plexin_repeat"/>
</dbReference>
<dbReference type="InterPro" id="IPR016201">
    <property type="entry name" value="PSI"/>
</dbReference>
<dbReference type="InterPro" id="IPR042824">
    <property type="entry name" value="Sema7A_sema"/>
</dbReference>
<dbReference type="InterPro" id="IPR001627">
    <property type="entry name" value="Semap_dom"/>
</dbReference>
<dbReference type="InterPro" id="IPR036352">
    <property type="entry name" value="Semap_dom_sf"/>
</dbReference>
<dbReference type="InterPro" id="IPR027231">
    <property type="entry name" value="Semaphorin"/>
</dbReference>
<dbReference type="InterPro" id="IPR015943">
    <property type="entry name" value="WD40/YVTN_repeat-like_dom_sf"/>
</dbReference>
<dbReference type="PANTHER" id="PTHR11036">
    <property type="entry name" value="SEMAPHORIN"/>
    <property type="match status" value="1"/>
</dbReference>
<dbReference type="PANTHER" id="PTHR11036:SF80">
    <property type="entry name" value="SEMAPHORIN-7A"/>
    <property type="match status" value="1"/>
</dbReference>
<dbReference type="Pfam" id="PF01437">
    <property type="entry name" value="PSI"/>
    <property type="match status" value="1"/>
</dbReference>
<dbReference type="Pfam" id="PF01403">
    <property type="entry name" value="Sema"/>
    <property type="match status" value="1"/>
</dbReference>
<dbReference type="SMART" id="SM00423">
    <property type="entry name" value="PSI"/>
    <property type="match status" value="1"/>
</dbReference>
<dbReference type="SMART" id="SM00630">
    <property type="entry name" value="Sema"/>
    <property type="match status" value="1"/>
</dbReference>
<dbReference type="SUPFAM" id="SSF48726">
    <property type="entry name" value="Immunoglobulin"/>
    <property type="match status" value="1"/>
</dbReference>
<dbReference type="SUPFAM" id="SSF103575">
    <property type="entry name" value="Plexin repeat"/>
    <property type="match status" value="1"/>
</dbReference>
<dbReference type="SUPFAM" id="SSF101912">
    <property type="entry name" value="Sema domain"/>
    <property type="match status" value="1"/>
</dbReference>
<dbReference type="PROSITE" id="PS50835">
    <property type="entry name" value="IG_LIKE"/>
    <property type="match status" value="1"/>
</dbReference>
<dbReference type="PROSITE" id="PS51004">
    <property type="entry name" value="SEMA"/>
    <property type="match status" value="1"/>
</dbReference>